<organism>
    <name type="scientific">Mus musculus</name>
    <name type="common">Mouse</name>
    <dbReference type="NCBI Taxonomy" id="10090"/>
    <lineage>
        <taxon>Eukaryota</taxon>
        <taxon>Metazoa</taxon>
        <taxon>Chordata</taxon>
        <taxon>Craniata</taxon>
        <taxon>Vertebrata</taxon>
        <taxon>Euteleostomi</taxon>
        <taxon>Mammalia</taxon>
        <taxon>Eutheria</taxon>
        <taxon>Euarchontoglires</taxon>
        <taxon>Glires</taxon>
        <taxon>Rodentia</taxon>
        <taxon>Myomorpha</taxon>
        <taxon>Muroidea</taxon>
        <taxon>Muridae</taxon>
        <taxon>Murinae</taxon>
        <taxon>Mus</taxon>
        <taxon>Mus</taxon>
    </lineage>
</organism>
<comment type="function">
    <text evidence="1">Catalytic component of the RNA exosome complex which has 3'-&gt;5' exoribonuclease activity and participates in a multitude of cellular RNA processing and degradation events. In the cytoplasm, the RNA exosome complex is involved in general mRNA turnover and specifically degrades inherently unstable mRNAs containing AU-rich elements (AREs) within their 3' untranslated regions, and in RNA surveillance pathways, preventing translation of aberrant mRNAs. It seems to be involved in degradation of histone mRNA.</text>
</comment>
<comment type="catalytic activity">
    <reaction evidence="1">
        <text>Exonucleolytic cleavage in the 3'- to 5'-direction to yield nucleoside 5'-phosphates.</text>
        <dbReference type="EC" id="3.1.13.1"/>
    </reaction>
</comment>
<comment type="cofactor">
    <cofactor evidence="1">
        <name>Mg(2+)</name>
        <dbReference type="ChEBI" id="CHEBI:18420"/>
    </cofactor>
</comment>
<comment type="subunit">
    <text evidence="1">Component of the RNA exosome complex. The catalytically inactive RNA exosome core (Exo-9) complex is believed to associate with catalytic subunits EXOSC10, and DIS3 or DIS3L in cytoplasmic- and nuclear-specific RNA exosome complex forms (By similarity).</text>
</comment>
<comment type="subcellular location">
    <subcellularLocation>
        <location evidence="1">Cytoplasm</location>
    </subcellularLocation>
</comment>
<comment type="alternative products">
    <event type="alternative splicing"/>
    <isoform>
        <id>Q8C0S1-1</id>
        <name>1</name>
        <sequence type="displayed"/>
    </isoform>
    <isoform>
        <id>Q8C0S1-2</id>
        <name>2</name>
        <sequence type="described" ref="VSP_030370"/>
    </isoform>
</comment>
<comment type="similarity">
    <text evidence="5">Belongs to the RNR ribonuclease family.</text>
</comment>
<comment type="sequence caution" evidence="5">
    <conflict type="erroneous initiation">
        <sequence resource="EMBL-CDS" id="AAH56939"/>
    </conflict>
    <text>Truncated N-terminus.</text>
</comment>
<comment type="sequence caution" evidence="5">
    <conflict type="erroneous initiation">
        <sequence resource="EMBL-CDS" id="BAD32588"/>
    </conflict>
    <text>Extended N-terminus.</text>
</comment>
<reference key="1">
    <citation type="journal article" date="2004" name="DNA Res.">
        <title>Prediction of the coding sequences of mouse homologues of KIAA gene: IV. The complete nucleotide sequences of 500 mouse KIAA-homologous cDNAs identified by screening of terminal sequences of cDNA clones randomly sampled from size-fractionated libraries.</title>
        <authorList>
            <person name="Okazaki N."/>
            <person name="Kikuno R."/>
            <person name="Ohara R."/>
            <person name="Inamoto S."/>
            <person name="Koseki H."/>
            <person name="Hiraoka S."/>
            <person name="Saga Y."/>
            <person name="Seino S."/>
            <person name="Nishimura M."/>
            <person name="Kaisho T."/>
            <person name="Hoshino K."/>
            <person name="Kitamura H."/>
            <person name="Nagase T."/>
            <person name="Ohara O."/>
            <person name="Koga H."/>
        </authorList>
    </citation>
    <scope>NUCLEOTIDE SEQUENCE [LARGE SCALE MRNA] (ISOFORM 1)</scope>
    <source>
        <tissue>Thymus</tissue>
    </source>
</reference>
<reference key="2">
    <citation type="journal article" date="2005" name="Science">
        <title>The transcriptional landscape of the mammalian genome.</title>
        <authorList>
            <person name="Carninci P."/>
            <person name="Kasukawa T."/>
            <person name="Katayama S."/>
            <person name="Gough J."/>
            <person name="Frith M.C."/>
            <person name="Maeda N."/>
            <person name="Oyama R."/>
            <person name="Ravasi T."/>
            <person name="Lenhard B."/>
            <person name="Wells C."/>
            <person name="Kodzius R."/>
            <person name="Shimokawa K."/>
            <person name="Bajic V.B."/>
            <person name="Brenner S.E."/>
            <person name="Batalov S."/>
            <person name="Forrest A.R."/>
            <person name="Zavolan M."/>
            <person name="Davis M.J."/>
            <person name="Wilming L.G."/>
            <person name="Aidinis V."/>
            <person name="Allen J.E."/>
            <person name="Ambesi-Impiombato A."/>
            <person name="Apweiler R."/>
            <person name="Aturaliya R.N."/>
            <person name="Bailey T.L."/>
            <person name="Bansal M."/>
            <person name="Baxter L."/>
            <person name="Beisel K.W."/>
            <person name="Bersano T."/>
            <person name="Bono H."/>
            <person name="Chalk A.M."/>
            <person name="Chiu K.P."/>
            <person name="Choudhary V."/>
            <person name="Christoffels A."/>
            <person name="Clutterbuck D.R."/>
            <person name="Crowe M.L."/>
            <person name="Dalla E."/>
            <person name="Dalrymple B.P."/>
            <person name="de Bono B."/>
            <person name="Della Gatta G."/>
            <person name="di Bernardo D."/>
            <person name="Down T."/>
            <person name="Engstrom P."/>
            <person name="Fagiolini M."/>
            <person name="Faulkner G."/>
            <person name="Fletcher C.F."/>
            <person name="Fukushima T."/>
            <person name="Furuno M."/>
            <person name="Futaki S."/>
            <person name="Gariboldi M."/>
            <person name="Georgii-Hemming P."/>
            <person name="Gingeras T.R."/>
            <person name="Gojobori T."/>
            <person name="Green R.E."/>
            <person name="Gustincich S."/>
            <person name="Harbers M."/>
            <person name="Hayashi Y."/>
            <person name="Hensch T.K."/>
            <person name="Hirokawa N."/>
            <person name="Hill D."/>
            <person name="Huminiecki L."/>
            <person name="Iacono M."/>
            <person name="Ikeo K."/>
            <person name="Iwama A."/>
            <person name="Ishikawa T."/>
            <person name="Jakt M."/>
            <person name="Kanapin A."/>
            <person name="Katoh M."/>
            <person name="Kawasawa Y."/>
            <person name="Kelso J."/>
            <person name="Kitamura H."/>
            <person name="Kitano H."/>
            <person name="Kollias G."/>
            <person name="Krishnan S.P."/>
            <person name="Kruger A."/>
            <person name="Kummerfeld S.K."/>
            <person name="Kurochkin I.V."/>
            <person name="Lareau L.F."/>
            <person name="Lazarevic D."/>
            <person name="Lipovich L."/>
            <person name="Liu J."/>
            <person name="Liuni S."/>
            <person name="McWilliam S."/>
            <person name="Madan Babu M."/>
            <person name="Madera M."/>
            <person name="Marchionni L."/>
            <person name="Matsuda H."/>
            <person name="Matsuzawa S."/>
            <person name="Miki H."/>
            <person name="Mignone F."/>
            <person name="Miyake S."/>
            <person name="Morris K."/>
            <person name="Mottagui-Tabar S."/>
            <person name="Mulder N."/>
            <person name="Nakano N."/>
            <person name="Nakauchi H."/>
            <person name="Ng P."/>
            <person name="Nilsson R."/>
            <person name="Nishiguchi S."/>
            <person name="Nishikawa S."/>
            <person name="Nori F."/>
            <person name="Ohara O."/>
            <person name="Okazaki Y."/>
            <person name="Orlando V."/>
            <person name="Pang K.C."/>
            <person name="Pavan W.J."/>
            <person name="Pavesi G."/>
            <person name="Pesole G."/>
            <person name="Petrovsky N."/>
            <person name="Piazza S."/>
            <person name="Reed J."/>
            <person name="Reid J.F."/>
            <person name="Ring B.Z."/>
            <person name="Ringwald M."/>
            <person name="Rost B."/>
            <person name="Ruan Y."/>
            <person name="Salzberg S.L."/>
            <person name="Sandelin A."/>
            <person name="Schneider C."/>
            <person name="Schoenbach C."/>
            <person name="Sekiguchi K."/>
            <person name="Semple C.A."/>
            <person name="Seno S."/>
            <person name="Sessa L."/>
            <person name="Sheng Y."/>
            <person name="Shibata Y."/>
            <person name="Shimada H."/>
            <person name="Shimada K."/>
            <person name="Silva D."/>
            <person name="Sinclair B."/>
            <person name="Sperling S."/>
            <person name="Stupka E."/>
            <person name="Sugiura K."/>
            <person name="Sultana R."/>
            <person name="Takenaka Y."/>
            <person name="Taki K."/>
            <person name="Tammoja K."/>
            <person name="Tan S.L."/>
            <person name="Tang S."/>
            <person name="Taylor M.S."/>
            <person name="Tegner J."/>
            <person name="Teichmann S.A."/>
            <person name="Ueda H.R."/>
            <person name="van Nimwegen E."/>
            <person name="Verardo R."/>
            <person name="Wei C.L."/>
            <person name="Yagi K."/>
            <person name="Yamanishi H."/>
            <person name="Zabarovsky E."/>
            <person name="Zhu S."/>
            <person name="Zimmer A."/>
            <person name="Hide W."/>
            <person name="Bult C."/>
            <person name="Grimmond S.M."/>
            <person name="Teasdale R.D."/>
            <person name="Liu E.T."/>
            <person name="Brusic V."/>
            <person name="Quackenbush J."/>
            <person name="Wahlestedt C."/>
            <person name="Mattick J.S."/>
            <person name="Hume D.A."/>
            <person name="Kai C."/>
            <person name="Sasaki D."/>
            <person name="Tomaru Y."/>
            <person name="Fukuda S."/>
            <person name="Kanamori-Katayama M."/>
            <person name="Suzuki M."/>
            <person name="Aoki J."/>
            <person name="Arakawa T."/>
            <person name="Iida J."/>
            <person name="Imamura K."/>
            <person name="Itoh M."/>
            <person name="Kato T."/>
            <person name="Kawaji H."/>
            <person name="Kawagashira N."/>
            <person name="Kawashima T."/>
            <person name="Kojima M."/>
            <person name="Kondo S."/>
            <person name="Konno H."/>
            <person name="Nakano K."/>
            <person name="Ninomiya N."/>
            <person name="Nishio T."/>
            <person name="Okada M."/>
            <person name="Plessy C."/>
            <person name="Shibata K."/>
            <person name="Shiraki T."/>
            <person name="Suzuki S."/>
            <person name="Tagami M."/>
            <person name="Waki K."/>
            <person name="Watahiki A."/>
            <person name="Okamura-Oho Y."/>
            <person name="Suzuki H."/>
            <person name="Kawai J."/>
            <person name="Hayashizaki Y."/>
        </authorList>
    </citation>
    <scope>NUCLEOTIDE SEQUENCE [LARGE SCALE MRNA] (ISOFORM 2)</scope>
    <source>
        <strain>C57BL/6J</strain>
        <tissue>Testis</tissue>
    </source>
</reference>
<reference key="3">
    <citation type="journal article" date="2004" name="Genome Res.">
        <title>The status, quality, and expansion of the NIH full-length cDNA project: the Mammalian Gene Collection (MGC).</title>
        <authorList>
            <consortium name="The MGC Project Team"/>
        </authorList>
    </citation>
    <scope>NUCLEOTIDE SEQUENCE [LARGE SCALE MRNA] (ISOFORM 1)</scope>
    <source>
        <strain>C57BL/6J</strain>
        <tissue>Brain</tissue>
    </source>
</reference>
<reference key="4">
    <citation type="journal article" date="2010" name="Cell">
        <title>A tissue-specific atlas of mouse protein phosphorylation and expression.</title>
        <authorList>
            <person name="Huttlin E.L."/>
            <person name="Jedrychowski M.P."/>
            <person name="Elias J.E."/>
            <person name="Goswami T."/>
            <person name="Rad R."/>
            <person name="Beausoleil S.A."/>
            <person name="Villen J."/>
            <person name="Haas W."/>
            <person name="Sowa M.E."/>
            <person name="Gygi S.P."/>
        </authorList>
    </citation>
    <scope>IDENTIFICATION BY MASS SPECTROMETRY [LARGE SCALE ANALYSIS]</scope>
    <source>
        <tissue>Liver</tissue>
    </source>
</reference>
<gene>
    <name type="primary">Dis3l</name>
    <name type="synonym">Kiaa1955</name>
</gene>
<protein>
    <recommendedName>
        <fullName>DIS3-like exonuclease 1</fullName>
        <ecNumber evidence="1">3.1.13.1</ecNumber>
    </recommendedName>
</protein>
<sequence length="1053" mass="120284">MLQKREKVLLLRTFQGRTLRIVREHYLRPSVPCNSPLCPQPAACRNDGKLLAAEVTHYVIPDWKVVQDYLEVLEFPELKGVIFMQTACQAVQHQRGRRQYNKLRNLLKDARHDCVLFANEFQQHCYLPREKGEAMEKWQTRSIYNSAVWYYHHCEDRMPIVMVTEDEEAIQKYGSETEGVFVISFKNYLDNFWPDLKAAHDLCDSILQSRRERETESQETHGKEYPEHLPLEVLEAGIKSGRYIQGILNVNKHRAQIEAFVRLHGASSKDSGLVSDILIHGSKARNRSIHGDVVVVEMLPKSEWKGRTAALGENDSDDKASGESPSEPMPTGRVVGILQKNWRDYVVTFPSKEEVQSQGKNAQKILVTPWDYRIPKIRISTQQAEALQDFRVVVRIDSWEATSVYPNGHFVRVLGRIGDLEGEIATILVENSISVVPFSEAQMCEMPVNTPENPWKVSPKEEQERKDLRTTHLVFSIDPKGCEDVDDTLSVRTLNNGNLELGVHIADVTHFVAPNSYIDVEARTRATTYYLADRRYDMLPSILSADLCSLLGGVDRYAVSVMWELDKTSYEIKKVWYGRTIIRSAYKLFYEAAQELLDGNFSIVDDIPELKALDKQSQQAKLEELVWAIGKLTDIARHIRAKRDRCGALELEGVEVRVQLDDKKNIRDLIPKQPLEVHETVAECMILANHWVAKKIWESFPHQALLRQHPPPHQEFFSELRECAKAKGFFIDTRSNKTLADSLDSANDPKDPLVNKLLRSMATQAMSNALYFSTGSCAEEEFHHYGLALDKYTHFTSPIRRYSDIVVHRLLMAAISKDKKMEIKENLFSNKNLEELCRHINNRNRAAQRSQKQSTELFQCMYFKDRDAETEERCIADGVIYSIRTNGVLVFIPRFGIKGAAYLKNKDSLVISCGPEGSSEWKPGSLQRSQNKIISTTAGGQSVTFHLFDHVTVRISVQASRCHSDTIRLEIVSNKPYMIPNTELCHQSSLLKSELVKEVTRSVEEAQLAQEVKGKVIQEEHQEYCQTKGRSLYTLLEEIRDLALLDVSDSCAM</sequence>
<keyword id="KW-0025">Alternative splicing</keyword>
<keyword id="KW-0963">Cytoplasm</keyword>
<keyword id="KW-0269">Exonuclease</keyword>
<keyword id="KW-0271">Exosome</keyword>
<keyword id="KW-0378">Hydrolase</keyword>
<keyword id="KW-0460">Magnesium</keyword>
<keyword id="KW-0540">Nuclease</keyword>
<keyword id="KW-0597">Phosphoprotein</keyword>
<keyword id="KW-1185">Reference proteome</keyword>
<keyword id="KW-0694">RNA-binding</keyword>
<evidence type="ECO:0000250" key="1">
    <source>
        <dbReference type="UniProtKB" id="Q8TF46"/>
    </source>
</evidence>
<evidence type="ECO:0000255" key="2"/>
<evidence type="ECO:0000256" key="3">
    <source>
        <dbReference type="SAM" id="MobiDB-lite"/>
    </source>
</evidence>
<evidence type="ECO:0000303" key="4">
    <source>
    </source>
</evidence>
<evidence type="ECO:0000305" key="5"/>
<proteinExistence type="evidence at protein level"/>
<feature type="chain" id="PRO_0000314811" description="DIS3-like exonuclease 1">
    <location>
        <begin position="1"/>
        <end position="1053"/>
    </location>
</feature>
<feature type="domain" description="CSD1" evidence="2">
    <location>
        <begin position="236"/>
        <end position="310"/>
    </location>
</feature>
<feature type="domain" description="CSD2" evidence="2">
    <location>
        <begin position="365"/>
        <end position="431"/>
    </location>
</feature>
<feature type="domain" description="RNB" evidence="2">
    <location>
        <begin position="465"/>
        <end position="816"/>
    </location>
</feature>
<feature type="region of interest" description="Disordered" evidence="3">
    <location>
        <begin position="306"/>
        <end position="332"/>
    </location>
</feature>
<feature type="modified residue" description="Phosphoserine" evidence="1">
    <location>
        <position position="989"/>
    </location>
</feature>
<feature type="splice variant" id="VSP_030370" description="In isoform 2." evidence="4">
    <location>
        <begin position="1"/>
        <end position="83"/>
    </location>
</feature>
<accession>Q8C0S1</accession>
<accession>Q69Z56</accession>
<dbReference type="EC" id="3.1.13.1" evidence="1"/>
<dbReference type="EMBL" id="AK173310">
    <property type="protein sequence ID" value="BAD32588.1"/>
    <property type="status" value="ALT_INIT"/>
    <property type="molecule type" value="mRNA"/>
</dbReference>
<dbReference type="EMBL" id="AK029974">
    <property type="protein sequence ID" value="BAC26710.1"/>
    <property type="molecule type" value="mRNA"/>
</dbReference>
<dbReference type="EMBL" id="BC056939">
    <property type="protein sequence ID" value="AAH56939.1"/>
    <property type="status" value="ALT_INIT"/>
    <property type="molecule type" value="mRNA"/>
</dbReference>
<dbReference type="CCDS" id="CCDS23280.1">
    <molecule id="Q8C0S1-2"/>
</dbReference>
<dbReference type="CCDS" id="CCDS52832.1">
    <molecule id="Q8C0S1-1"/>
</dbReference>
<dbReference type="RefSeq" id="NP_001001295.2">
    <molecule id="Q8C0S1-1"/>
    <property type="nucleotide sequence ID" value="NM_001001295.2"/>
</dbReference>
<dbReference type="RefSeq" id="NP_001171255.1">
    <molecule id="Q8C0S1-2"/>
    <property type="nucleotide sequence ID" value="NM_001177784.1"/>
</dbReference>
<dbReference type="RefSeq" id="NP_766107.1">
    <molecule id="Q8C0S1-2"/>
    <property type="nucleotide sequence ID" value="NM_172519.3"/>
</dbReference>
<dbReference type="RefSeq" id="XP_006511045.1">
    <molecule id="Q8C0S1-2"/>
    <property type="nucleotide sequence ID" value="XM_006510982.5"/>
</dbReference>
<dbReference type="SMR" id="Q8C0S1"/>
<dbReference type="BioGRID" id="229452">
    <property type="interactions" value="1"/>
</dbReference>
<dbReference type="ComplexPortal" id="CPX-596">
    <property type="entry name" value="Cytoplasmic exosome complex, Dis3l variant"/>
</dbReference>
<dbReference type="ComplexPortal" id="CPX-601">
    <property type="entry name" value="Cytoplasmic exosome complex, Dis3l-Exosc10 variant"/>
</dbReference>
<dbReference type="FunCoup" id="Q8C0S1">
    <property type="interactions" value="272"/>
</dbReference>
<dbReference type="STRING" id="10090.ENSMUSP00000129772"/>
<dbReference type="PhosphoSitePlus" id="Q8C0S1"/>
<dbReference type="jPOST" id="Q8C0S1"/>
<dbReference type="PaxDb" id="10090-ENSMUSP00000113503"/>
<dbReference type="PeptideAtlas" id="Q8C0S1"/>
<dbReference type="ProteomicsDB" id="279656">
    <molecule id="Q8C0S1-1"/>
</dbReference>
<dbReference type="ProteomicsDB" id="279657">
    <molecule id="Q8C0S1-2"/>
</dbReference>
<dbReference type="Pumba" id="Q8C0S1"/>
<dbReference type="Antibodypedia" id="26111">
    <property type="antibodies" value="131 antibodies from 22 providers"/>
</dbReference>
<dbReference type="DNASU" id="213550"/>
<dbReference type="Ensembl" id="ENSMUST00000068367.14">
    <molecule id="Q8C0S1-2"/>
    <property type="protein sequence ID" value="ENSMUSP00000063830.8"/>
    <property type="gene ID" value="ENSMUSG00000032396.18"/>
</dbReference>
<dbReference type="Ensembl" id="ENSMUST00000113890.2">
    <molecule id="Q8C0S1-2"/>
    <property type="protein sequence ID" value="ENSMUSP00000109522.2"/>
    <property type="gene ID" value="ENSMUSG00000032396.18"/>
</dbReference>
<dbReference type="Ensembl" id="ENSMUST00000120760.8">
    <molecule id="Q8C0S1-2"/>
    <property type="protein sequence ID" value="ENSMUSP00000113503.2"/>
    <property type="gene ID" value="ENSMUSG00000032396.18"/>
</dbReference>
<dbReference type="Ensembl" id="ENSMUST00000168844.9">
    <molecule id="Q8C0S1-1"/>
    <property type="protein sequence ID" value="ENSMUSP00000129772.3"/>
    <property type="gene ID" value="ENSMUSG00000032396.18"/>
</dbReference>
<dbReference type="GeneID" id="213550"/>
<dbReference type="KEGG" id="mmu:213550"/>
<dbReference type="UCSC" id="uc009qbu.2">
    <molecule id="Q8C0S1-1"/>
    <property type="organism name" value="mouse"/>
</dbReference>
<dbReference type="AGR" id="MGI:2143272"/>
<dbReference type="CTD" id="115752"/>
<dbReference type="MGI" id="MGI:2143272">
    <property type="gene designation" value="Dis3l"/>
</dbReference>
<dbReference type="VEuPathDB" id="HostDB:ENSMUSG00000032396"/>
<dbReference type="eggNOG" id="KOG2102">
    <property type="taxonomic scope" value="Eukaryota"/>
</dbReference>
<dbReference type="GeneTree" id="ENSGT00530000063106"/>
<dbReference type="HOGENOM" id="CLU_002333_5_0_1"/>
<dbReference type="InParanoid" id="Q8C0S1"/>
<dbReference type="OMA" id="VIRIDGW"/>
<dbReference type="OrthoDB" id="372421at2759"/>
<dbReference type="PhylomeDB" id="Q8C0S1"/>
<dbReference type="TreeFam" id="TF105755"/>
<dbReference type="BioGRID-ORCS" id="213550">
    <property type="hits" value="11 hits in 76 CRISPR screens"/>
</dbReference>
<dbReference type="PRO" id="PR:Q8C0S1"/>
<dbReference type="Proteomes" id="UP000000589">
    <property type="component" value="Chromosome 9"/>
</dbReference>
<dbReference type="RNAct" id="Q8C0S1">
    <property type="molecule type" value="protein"/>
</dbReference>
<dbReference type="Bgee" id="ENSMUSG00000032396">
    <property type="expression patterns" value="Expressed in spermatocyte and 205 other cell types or tissues"/>
</dbReference>
<dbReference type="ExpressionAtlas" id="Q8C0S1">
    <property type="expression patterns" value="baseline and differential"/>
</dbReference>
<dbReference type="GO" id="GO:0005813">
    <property type="term" value="C:centrosome"/>
    <property type="evidence" value="ECO:0007669"/>
    <property type="project" value="Ensembl"/>
</dbReference>
<dbReference type="GO" id="GO:0036064">
    <property type="term" value="C:ciliary basal body"/>
    <property type="evidence" value="ECO:0007669"/>
    <property type="project" value="Ensembl"/>
</dbReference>
<dbReference type="GO" id="GO:0000177">
    <property type="term" value="C:cytoplasmic exosome (RNase complex)"/>
    <property type="evidence" value="ECO:0000250"/>
    <property type="project" value="UniProtKB"/>
</dbReference>
<dbReference type="GO" id="GO:0005829">
    <property type="term" value="C:cytosol"/>
    <property type="evidence" value="ECO:0000266"/>
    <property type="project" value="ComplexPortal"/>
</dbReference>
<dbReference type="GO" id="GO:0005886">
    <property type="term" value="C:plasma membrane"/>
    <property type="evidence" value="ECO:0007669"/>
    <property type="project" value="Ensembl"/>
</dbReference>
<dbReference type="GO" id="GO:0000175">
    <property type="term" value="F:3'-5'-RNA exonuclease activity"/>
    <property type="evidence" value="ECO:0000250"/>
    <property type="project" value="UniProtKB"/>
</dbReference>
<dbReference type="GO" id="GO:0019899">
    <property type="term" value="F:enzyme binding"/>
    <property type="evidence" value="ECO:0007669"/>
    <property type="project" value="Ensembl"/>
</dbReference>
<dbReference type="GO" id="GO:0008859">
    <property type="term" value="F:exoribonuclease II activity"/>
    <property type="evidence" value="ECO:0000250"/>
    <property type="project" value="UniProtKB"/>
</dbReference>
<dbReference type="GO" id="GO:0003723">
    <property type="term" value="F:RNA binding"/>
    <property type="evidence" value="ECO:0007669"/>
    <property type="project" value="UniProtKB-KW"/>
</dbReference>
<dbReference type="GO" id="GO:0006401">
    <property type="term" value="P:RNA catabolic process"/>
    <property type="evidence" value="ECO:0000266"/>
    <property type="project" value="ComplexPortal"/>
</dbReference>
<dbReference type="GO" id="GO:0006396">
    <property type="term" value="P:RNA processing"/>
    <property type="evidence" value="ECO:0000266"/>
    <property type="project" value="ComplexPortal"/>
</dbReference>
<dbReference type="GO" id="GO:0016075">
    <property type="term" value="P:rRNA catabolic process"/>
    <property type="evidence" value="ECO:0007669"/>
    <property type="project" value="Ensembl"/>
</dbReference>
<dbReference type="CDD" id="cd09862">
    <property type="entry name" value="PIN_Rrp44-like"/>
    <property type="match status" value="1"/>
</dbReference>
<dbReference type="FunFam" id="2.40.50.140:FF:000143">
    <property type="entry name" value="DIS3-like exonuclease 1 isoform X1"/>
    <property type="match status" value="1"/>
</dbReference>
<dbReference type="FunFam" id="2.40.50.690:FF:000004">
    <property type="entry name" value="DIS3-like exonuclease 1 isoform X1"/>
    <property type="match status" value="1"/>
</dbReference>
<dbReference type="FunFam" id="3.40.50.1010:FF:000021">
    <property type="entry name" value="DIS3-like exonuclease 1 isoform X1"/>
    <property type="match status" value="1"/>
</dbReference>
<dbReference type="FunFam" id="2.40.50.700:FF:000004">
    <property type="entry name" value="Exosome complex exonuclease RRP44 homolog A"/>
    <property type="match status" value="1"/>
</dbReference>
<dbReference type="Gene3D" id="2.40.50.690">
    <property type="match status" value="1"/>
</dbReference>
<dbReference type="Gene3D" id="2.40.50.700">
    <property type="match status" value="1"/>
</dbReference>
<dbReference type="Gene3D" id="3.40.50.1010">
    <property type="entry name" value="5'-nuclease"/>
    <property type="match status" value="1"/>
</dbReference>
<dbReference type="Gene3D" id="2.40.50.140">
    <property type="entry name" value="Nucleic acid-binding proteins"/>
    <property type="match status" value="1"/>
</dbReference>
<dbReference type="InterPro" id="IPR041505">
    <property type="entry name" value="Dis3_CSD2"/>
</dbReference>
<dbReference type="InterPro" id="IPR012340">
    <property type="entry name" value="NA-bd_OB-fold"/>
</dbReference>
<dbReference type="InterPro" id="IPR001900">
    <property type="entry name" value="RNase_II/R"/>
</dbReference>
<dbReference type="InterPro" id="IPR022966">
    <property type="entry name" value="RNase_II/R_CS"/>
</dbReference>
<dbReference type="InterPro" id="IPR050180">
    <property type="entry name" value="RNR_Ribonuclease"/>
</dbReference>
<dbReference type="InterPro" id="IPR033771">
    <property type="entry name" value="Rrp44_CSD1"/>
</dbReference>
<dbReference type="InterPro" id="IPR033770">
    <property type="entry name" value="RRP44_S1"/>
</dbReference>
<dbReference type="PANTHER" id="PTHR23355:SF30">
    <property type="entry name" value="DIS3-LIKE EXONUCLEASE 1"/>
    <property type="match status" value="1"/>
</dbReference>
<dbReference type="PANTHER" id="PTHR23355">
    <property type="entry name" value="RIBONUCLEASE"/>
    <property type="match status" value="1"/>
</dbReference>
<dbReference type="Pfam" id="PF17849">
    <property type="entry name" value="OB_Dis3"/>
    <property type="match status" value="1"/>
</dbReference>
<dbReference type="Pfam" id="PF00773">
    <property type="entry name" value="RNB"/>
    <property type="match status" value="1"/>
</dbReference>
<dbReference type="Pfam" id="PF17216">
    <property type="entry name" value="Rrp44_CSD1"/>
    <property type="match status" value="1"/>
</dbReference>
<dbReference type="Pfam" id="PF17215">
    <property type="entry name" value="Rrp44_S1"/>
    <property type="match status" value="1"/>
</dbReference>
<dbReference type="SMART" id="SM00955">
    <property type="entry name" value="RNB"/>
    <property type="match status" value="1"/>
</dbReference>
<dbReference type="SUPFAM" id="SSF50249">
    <property type="entry name" value="Nucleic acid-binding proteins"/>
    <property type="match status" value="3"/>
</dbReference>
<dbReference type="PROSITE" id="PS01175">
    <property type="entry name" value="RIBONUCLEASE_II"/>
    <property type="match status" value="1"/>
</dbReference>
<name>DI3L1_MOUSE</name>